<keyword id="KW-0687">Ribonucleoprotein</keyword>
<keyword id="KW-0689">Ribosomal protein</keyword>
<reference key="1">
    <citation type="journal article" date="2007" name="PLoS Genet.">
        <title>The complete genome sequence of Yersinia pseudotuberculosis IP31758, the causative agent of Far East scarlet-like fever.</title>
        <authorList>
            <person name="Eppinger M."/>
            <person name="Rosovitz M.J."/>
            <person name="Fricke W.F."/>
            <person name="Rasko D.A."/>
            <person name="Kokorina G."/>
            <person name="Fayolle C."/>
            <person name="Lindler L.E."/>
            <person name="Carniel E."/>
            <person name="Ravel J."/>
        </authorList>
    </citation>
    <scope>NUCLEOTIDE SEQUENCE [LARGE SCALE GENOMIC DNA]</scope>
    <source>
        <strain>IP 31758</strain>
    </source>
</reference>
<evidence type="ECO:0000255" key="1">
    <source>
        <dbReference type="HAMAP-Rule" id="MF_01366"/>
    </source>
</evidence>
<evidence type="ECO:0000305" key="2"/>
<protein>
    <recommendedName>
        <fullName evidence="1">Large ribosomal subunit protein uL13</fullName>
    </recommendedName>
    <alternativeName>
        <fullName evidence="2">50S ribosomal protein L13</fullName>
    </alternativeName>
</protein>
<sequence length="142" mass="16032">MKTFTAKPETVKRDWYVVDASGKTLGRLATELARRLRGKHKAEYTPHVDTGDYIIVLNAEKVAVTGNKRTDKIYYHHTGFVGGIKQATFEEMIARRPERVIEIAVKGMLPKGPLGRAMYRKLKVYAGTEHNHAAQQPQVLDI</sequence>
<dbReference type="EMBL" id="CP000720">
    <property type="protein sequence ID" value="ABS46805.1"/>
    <property type="molecule type" value="Genomic_DNA"/>
</dbReference>
<dbReference type="RefSeq" id="WP_002210132.1">
    <property type="nucleotide sequence ID" value="NC_009708.1"/>
</dbReference>
<dbReference type="SMR" id="A7FDX4"/>
<dbReference type="GeneID" id="96662998"/>
<dbReference type="KEGG" id="ypi:YpsIP31758_0459"/>
<dbReference type="HOGENOM" id="CLU_082184_2_2_6"/>
<dbReference type="Proteomes" id="UP000002412">
    <property type="component" value="Chromosome"/>
</dbReference>
<dbReference type="GO" id="GO:0022625">
    <property type="term" value="C:cytosolic large ribosomal subunit"/>
    <property type="evidence" value="ECO:0007669"/>
    <property type="project" value="TreeGrafter"/>
</dbReference>
<dbReference type="GO" id="GO:0003729">
    <property type="term" value="F:mRNA binding"/>
    <property type="evidence" value="ECO:0007669"/>
    <property type="project" value="TreeGrafter"/>
</dbReference>
<dbReference type="GO" id="GO:0003735">
    <property type="term" value="F:structural constituent of ribosome"/>
    <property type="evidence" value="ECO:0007669"/>
    <property type="project" value="InterPro"/>
</dbReference>
<dbReference type="GO" id="GO:0017148">
    <property type="term" value="P:negative regulation of translation"/>
    <property type="evidence" value="ECO:0007669"/>
    <property type="project" value="TreeGrafter"/>
</dbReference>
<dbReference type="GO" id="GO:0006412">
    <property type="term" value="P:translation"/>
    <property type="evidence" value="ECO:0007669"/>
    <property type="project" value="UniProtKB-UniRule"/>
</dbReference>
<dbReference type="CDD" id="cd00392">
    <property type="entry name" value="Ribosomal_L13"/>
    <property type="match status" value="1"/>
</dbReference>
<dbReference type="FunFam" id="3.90.1180.10:FF:000001">
    <property type="entry name" value="50S ribosomal protein L13"/>
    <property type="match status" value="1"/>
</dbReference>
<dbReference type="Gene3D" id="3.90.1180.10">
    <property type="entry name" value="Ribosomal protein L13"/>
    <property type="match status" value="1"/>
</dbReference>
<dbReference type="HAMAP" id="MF_01366">
    <property type="entry name" value="Ribosomal_uL13"/>
    <property type="match status" value="1"/>
</dbReference>
<dbReference type="InterPro" id="IPR005822">
    <property type="entry name" value="Ribosomal_uL13"/>
</dbReference>
<dbReference type="InterPro" id="IPR005823">
    <property type="entry name" value="Ribosomal_uL13_bac-type"/>
</dbReference>
<dbReference type="InterPro" id="IPR023563">
    <property type="entry name" value="Ribosomal_uL13_CS"/>
</dbReference>
<dbReference type="InterPro" id="IPR036899">
    <property type="entry name" value="Ribosomal_uL13_sf"/>
</dbReference>
<dbReference type="NCBIfam" id="TIGR01066">
    <property type="entry name" value="rplM_bact"/>
    <property type="match status" value="1"/>
</dbReference>
<dbReference type="PANTHER" id="PTHR11545:SF2">
    <property type="entry name" value="LARGE RIBOSOMAL SUBUNIT PROTEIN UL13M"/>
    <property type="match status" value="1"/>
</dbReference>
<dbReference type="PANTHER" id="PTHR11545">
    <property type="entry name" value="RIBOSOMAL PROTEIN L13"/>
    <property type="match status" value="1"/>
</dbReference>
<dbReference type="Pfam" id="PF00572">
    <property type="entry name" value="Ribosomal_L13"/>
    <property type="match status" value="1"/>
</dbReference>
<dbReference type="PIRSF" id="PIRSF002181">
    <property type="entry name" value="Ribosomal_L13"/>
    <property type="match status" value="1"/>
</dbReference>
<dbReference type="SUPFAM" id="SSF52161">
    <property type="entry name" value="Ribosomal protein L13"/>
    <property type="match status" value="1"/>
</dbReference>
<dbReference type="PROSITE" id="PS00783">
    <property type="entry name" value="RIBOSOMAL_L13"/>
    <property type="match status" value="1"/>
</dbReference>
<proteinExistence type="inferred from homology"/>
<gene>
    <name evidence="1" type="primary">rplM</name>
    <name type="ordered locus">YpsIP31758_0459</name>
</gene>
<organism>
    <name type="scientific">Yersinia pseudotuberculosis serotype O:1b (strain IP 31758)</name>
    <dbReference type="NCBI Taxonomy" id="349747"/>
    <lineage>
        <taxon>Bacteria</taxon>
        <taxon>Pseudomonadati</taxon>
        <taxon>Pseudomonadota</taxon>
        <taxon>Gammaproteobacteria</taxon>
        <taxon>Enterobacterales</taxon>
        <taxon>Yersiniaceae</taxon>
        <taxon>Yersinia</taxon>
    </lineage>
</organism>
<name>RL13_YERP3</name>
<comment type="function">
    <text evidence="1">This protein is one of the early assembly proteins of the 50S ribosomal subunit, although it is not seen to bind rRNA by itself. It is important during the early stages of 50S assembly.</text>
</comment>
<comment type="subunit">
    <text evidence="1">Part of the 50S ribosomal subunit.</text>
</comment>
<comment type="similarity">
    <text evidence="1">Belongs to the universal ribosomal protein uL13 family.</text>
</comment>
<accession>A7FDX4</accession>
<feature type="chain" id="PRO_1000068000" description="Large ribosomal subunit protein uL13">
    <location>
        <begin position="1"/>
        <end position="142"/>
    </location>
</feature>